<accession>P37484</accession>
<reference key="1">
    <citation type="journal article" date="1994" name="DNA Res.">
        <title>Systematic sequencing of the 180 kilobase region of the Bacillus subtilis chromosome containing the replication origin.</title>
        <authorList>
            <person name="Ogasawara N."/>
            <person name="Nakai S."/>
            <person name="Yoshikawa H."/>
        </authorList>
    </citation>
    <scope>NUCLEOTIDE SEQUENCE [GENOMIC DNA]</scope>
    <source>
        <strain>168</strain>
    </source>
</reference>
<reference key="2">
    <citation type="journal article" date="1997" name="Nature">
        <title>The complete genome sequence of the Gram-positive bacterium Bacillus subtilis.</title>
        <authorList>
            <person name="Kunst F."/>
            <person name="Ogasawara N."/>
            <person name="Moszer I."/>
            <person name="Albertini A.M."/>
            <person name="Alloni G."/>
            <person name="Azevedo V."/>
            <person name="Bertero M.G."/>
            <person name="Bessieres P."/>
            <person name="Bolotin A."/>
            <person name="Borchert S."/>
            <person name="Borriss R."/>
            <person name="Boursier L."/>
            <person name="Brans A."/>
            <person name="Braun M."/>
            <person name="Brignell S.C."/>
            <person name="Bron S."/>
            <person name="Brouillet S."/>
            <person name="Bruschi C.V."/>
            <person name="Caldwell B."/>
            <person name="Capuano V."/>
            <person name="Carter N.M."/>
            <person name="Choi S.-K."/>
            <person name="Codani J.-J."/>
            <person name="Connerton I.F."/>
            <person name="Cummings N.J."/>
            <person name="Daniel R.A."/>
            <person name="Denizot F."/>
            <person name="Devine K.M."/>
            <person name="Duesterhoeft A."/>
            <person name="Ehrlich S.D."/>
            <person name="Emmerson P.T."/>
            <person name="Entian K.-D."/>
            <person name="Errington J."/>
            <person name="Fabret C."/>
            <person name="Ferrari E."/>
            <person name="Foulger D."/>
            <person name="Fritz C."/>
            <person name="Fujita M."/>
            <person name="Fujita Y."/>
            <person name="Fuma S."/>
            <person name="Galizzi A."/>
            <person name="Galleron N."/>
            <person name="Ghim S.-Y."/>
            <person name="Glaser P."/>
            <person name="Goffeau A."/>
            <person name="Golightly E.J."/>
            <person name="Grandi G."/>
            <person name="Guiseppi G."/>
            <person name="Guy B.J."/>
            <person name="Haga K."/>
            <person name="Haiech J."/>
            <person name="Harwood C.R."/>
            <person name="Henaut A."/>
            <person name="Hilbert H."/>
            <person name="Holsappel S."/>
            <person name="Hosono S."/>
            <person name="Hullo M.-F."/>
            <person name="Itaya M."/>
            <person name="Jones L.-M."/>
            <person name="Joris B."/>
            <person name="Karamata D."/>
            <person name="Kasahara Y."/>
            <person name="Klaerr-Blanchard M."/>
            <person name="Klein C."/>
            <person name="Kobayashi Y."/>
            <person name="Koetter P."/>
            <person name="Koningstein G."/>
            <person name="Krogh S."/>
            <person name="Kumano M."/>
            <person name="Kurita K."/>
            <person name="Lapidus A."/>
            <person name="Lardinois S."/>
            <person name="Lauber J."/>
            <person name="Lazarevic V."/>
            <person name="Lee S.-M."/>
            <person name="Levine A."/>
            <person name="Liu H."/>
            <person name="Masuda S."/>
            <person name="Mauel C."/>
            <person name="Medigue C."/>
            <person name="Medina N."/>
            <person name="Mellado R.P."/>
            <person name="Mizuno M."/>
            <person name="Moestl D."/>
            <person name="Nakai S."/>
            <person name="Noback M."/>
            <person name="Noone D."/>
            <person name="O'Reilly M."/>
            <person name="Ogawa K."/>
            <person name="Ogiwara A."/>
            <person name="Oudega B."/>
            <person name="Park S.-H."/>
            <person name="Parro V."/>
            <person name="Pohl T.M."/>
            <person name="Portetelle D."/>
            <person name="Porwollik S."/>
            <person name="Prescott A.M."/>
            <person name="Presecan E."/>
            <person name="Pujic P."/>
            <person name="Purnelle B."/>
            <person name="Rapoport G."/>
            <person name="Rey M."/>
            <person name="Reynolds S."/>
            <person name="Rieger M."/>
            <person name="Rivolta C."/>
            <person name="Rocha E."/>
            <person name="Roche B."/>
            <person name="Rose M."/>
            <person name="Sadaie Y."/>
            <person name="Sato T."/>
            <person name="Scanlan E."/>
            <person name="Schleich S."/>
            <person name="Schroeter R."/>
            <person name="Scoffone F."/>
            <person name="Sekiguchi J."/>
            <person name="Sekowska A."/>
            <person name="Seror S.J."/>
            <person name="Serror P."/>
            <person name="Shin B.-S."/>
            <person name="Soldo B."/>
            <person name="Sorokin A."/>
            <person name="Tacconi E."/>
            <person name="Takagi T."/>
            <person name="Takahashi H."/>
            <person name="Takemaru K."/>
            <person name="Takeuchi M."/>
            <person name="Tamakoshi A."/>
            <person name="Tanaka T."/>
            <person name="Terpstra P."/>
            <person name="Tognoni A."/>
            <person name="Tosato V."/>
            <person name="Uchiyama S."/>
            <person name="Vandenbol M."/>
            <person name="Vannier F."/>
            <person name="Vassarotti A."/>
            <person name="Viari A."/>
            <person name="Wambutt R."/>
            <person name="Wedler E."/>
            <person name="Wedler H."/>
            <person name="Weitzenegger T."/>
            <person name="Winters P."/>
            <person name="Wipat A."/>
            <person name="Yamamoto H."/>
            <person name="Yamane K."/>
            <person name="Yasumoto K."/>
            <person name="Yata K."/>
            <person name="Yoshida K."/>
            <person name="Yoshikawa H.-F."/>
            <person name="Zumstein E."/>
            <person name="Yoshikawa H."/>
            <person name="Danchin A."/>
        </authorList>
    </citation>
    <scope>NUCLEOTIDE SEQUENCE [LARGE SCALE GENOMIC DNA]</scope>
    <source>
        <strain>168</strain>
    </source>
</reference>
<reference key="3">
    <citation type="journal article" date="2010" name="J. Biol. Chem.">
        <title>YybT is a signaling protein that contains a cyclic dinucleotide phosphodiesterase domain and a GGDEF domain with ATPase activity.</title>
        <authorList>
            <person name="Rao F."/>
            <person name="See R.Y."/>
            <person name="Zhang D."/>
            <person name="Toh D.C."/>
            <person name="Ji Q."/>
            <person name="Liang Z.X."/>
        </authorList>
    </citation>
    <scope>FUNCTION</scope>
    <scope>CATALYTIC ACTIVITY</scope>
    <scope>COFACTOR</scope>
    <scope>ACTIVITY REGULATION</scope>
    <scope>BIOPHYSICOCHEMICAL PROPERTIES</scope>
    <scope>DOMAIN</scope>
    <scope>DISRUPTION PHENOTYPE</scope>
    <scope>PROBABLE TOPOLOGY</scope>
    <scope>MUTAGENESIS OF ASP-183; GLU-225; ARG-291 AND ASP-420</scope>
    <source>
        <strain>168</strain>
    </source>
</reference>
<reference key="4">
    <citation type="journal article" date="2011" name="J. Bacteriol.">
        <title>Unusual heme-binding PAS domain from YybT family proteins.</title>
        <authorList>
            <person name="Rao F."/>
            <person name="Ji Q."/>
            <person name="Soehano I."/>
            <person name="Liang Z.X."/>
        </authorList>
    </citation>
    <scope>FUNCTION</scope>
    <scope>ACTIVITY REGULATION</scope>
    <scope>COFACTOR</scope>
    <scope>DOMAIN</scope>
    <source>
        <strain>168</strain>
    </source>
</reference>
<reference key="5">
    <citation type="journal article" date="2011" name="EMBO Rep.">
        <title>c-di-AMP reports DNA integrity during sporulation in Bacillus subtilis.</title>
        <authorList>
            <person name="Oppenheimer-Shaanan Y."/>
            <person name="Wexselblatt E."/>
            <person name="Katzhendler J."/>
            <person name="Yavin E."/>
            <person name="Ben-Yehuda S."/>
        </authorList>
    </citation>
    <scope>SUBCELLULAR LOCATION</scope>
    <scope>DEVELOPMENTAL STAGE</scope>
    <scope>DISRUPTION PHENOTYPE</scope>
    <source>
        <strain>168 / PY79</strain>
    </source>
</reference>
<reference key="6">
    <citation type="journal article" date="2012" name="Mol. Microbiol.">
        <title>Analysis of the role of Bacillus subtilis sigma(M) in beta-lactam resistance reveals an essential role for c-di-AMP in peptidoglycan homeostasis.</title>
        <authorList>
            <person name="Luo Y."/>
            <person name="Helmann J.D."/>
        </authorList>
    </citation>
    <scope>FUNCTION</scope>
    <scope>DISRUPTION PHENOTYPE</scope>
    <scope>MUTAGENESIS OF ASP-420</scope>
    <source>
        <strain>168</strain>
    </source>
</reference>
<reference key="7">
    <citation type="journal article" date="2012" name="Microbiology">
        <title>A sigmaD-dependent antisense transcript modulates expression of the cyclic-di-AMP hydrolase GdpP in Bacillus subtilis.</title>
        <authorList>
            <person name="Luo Y."/>
            <person name="Helmann J.D."/>
        </authorList>
    </citation>
    <scope>INDUCTION</scope>
</reference>
<reference key="8">
    <citation type="journal article" date="2015" name="DNA Repair">
        <title>DisA and c-di-AMP act at the intersection between DNA-damage response and stress homeostasis in exponentially growing Bacillus subtilis cells.</title>
        <authorList>
            <person name="Gandara C."/>
            <person name="Alonso J.C."/>
        </authorList>
    </citation>
    <scope>FUNCTION</scope>
    <scope>DISRUPTION PHENOTYPE</scope>
    <source>
        <strain>168 / YB886 / BG214</strain>
    </source>
</reference>
<reference key="9">
    <citation type="journal article" date="2015" name="J. Bacteriol.">
        <title>An essential poison: synthesis and degradation of cyclic di-AMP in Bacillus subtilis.</title>
        <authorList>
            <person name="Gundlach J."/>
            <person name="Mehne F.M."/>
            <person name="Herzberg C."/>
            <person name="Kampf J."/>
            <person name="Valerius O."/>
            <person name="Kaever V."/>
            <person name="Stuelke J."/>
        </authorList>
    </citation>
    <scope>FUNCTION</scope>
    <scope>DISRUPTION PHENOTYPE</scope>
    <source>
        <strain>168</strain>
    </source>
</reference>
<protein>
    <recommendedName>
        <fullName evidence="11">Cyclic-di-AMP phosphodiesterase GdpP</fullName>
        <shortName evidence="10">c-di-AMP phosphodiesterase YybT</shortName>
        <ecNumber evidence="3">3.1.4.59</ecNumber>
    </recommendedName>
    <alternativeName>
        <fullName evidence="12">Cyclic-di-AMP hydrolase GdpP</fullName>
    </alternativeName>
    <alternativeName>
        <fullName>Cyclic-di-AMP phosphodiesterase YybT</fullName>
    </alternativeName>
</protein>
<name>GDPP_BACSU</name>
<proteinExistence type="evidence at protein level"/>
<organism>
    <name type="scientific">Bacillus subtilis (strain 168)</name>
    <dbReference type="NCBI Taxonomy" id="224308"/>
    <lineage>
        <taxon>Bacteria</taxon>
        <taxon>Bacillati</taxon>
        <taxon>Bacillota</taxon>
        <taxon>Bacilli</taxon>
        <taxon>Bacillales</taxon>
        <taxon>Bacillaceae</taxon>
        <taxon>Bacillus</taxon>
    </lineage>
</organism>
<sequence length="659" mass="74325">MPSFYEKPLFRYPIYALIALSIITILISFYFNWILGTVEVLLLAVILFFIKRADSLIRQEIDAYISTLSYRLKKVGEEALMEMPIGIMLFNDQYYIEWANPFLSSCFNESTLVGRSLYDTCESVVPLIKQEVESETVTLNDRKFRVVIKRDERLLYFFDVTEQIQIEKLYENERTVLAYIFLDNYDDVTQGLDDQTRSTMNSQVTSLLNAWAQEYGIFLKRTSSERFIAVLNEHILTELENSKFSILDEVREKTSFDGVALTLSVGVGASVSSLKELGDLAQSSLDLALGRGGDQVAIKLPNGKVKFYGGKTNPMEKRTRVRARVISHALKEIVTESSNVIIMGHKFPDMDSIGAAIGILKVAQANNKDGFIVIDPNQIGSSVQRLIGEIKKYEELWSRFITPEEAMEISNDDTLLVIVDTHKPSLVMEERLVNKIEHIVVIDHHRRGEEFIRDPLLVYMEPYASSTAELVTELLEYQPKRLKINMIEATALLAGIIVDTKSFSLRTGSRTFDAASYLRAKGADTVLVQKFLKETVDSYIKRAKLIQHTVLYKDNIAIASLPENEEEYFDQVLIAQAADSLLSMSEVEASFAVARRDEQTVCISARSLGEVNVQIIMEALEGGGHLTNAATQLSGISVSEALERLKHAIDEYFEGGVQR</sequence>
<evidence type="ECO:0000255" key="1"/>
<evidence type="ECO:0000255" key="2">
    <source>
        <dbReference type="PROSITE-ProRule" id="PRU00095"/>
    </source>
</evidence>
<evidence type="ECO:0000269" key="3">
    <source>
    </source>
</evidence>
<evidence type="ECO:0000269" key="4">
    <source>
    </source>
</evidence>
<evidence type="ECO:0000269" key="5">
    <source>
    </source>
</evidence>
<evidence type="ECO:0000269" key="6">
    <source>
    </source>
</evidence>
<evidence type="ECO:0000269" key="7">
    <source>
    </source>
</evidence>
<evidence type="ECO:0000269" key="8">
    <source>
    </source>
</evidence>
<evidence type="ECO:0000269" key="9">
    <source>
    </source>
</evidence>
<evidence type="ECO:0000303" key="10">
    <source>
    </source>
</evidence>
<evidence type="ECO:0000303" key="11">
    <source>
    </source>
</evidence>
<evidence type="ECO:0000303" key="12">
    <source>
    </source>
</evidence>
<evidence type="ECO:0000305" key="13"/>
<evidence type="ECO:0000305" key="14">
    <source>
    </source>
</evidence>
<feature type="chain" id="PRO_0000050071" description="Cyclic-di-AMP phosphodiesterase GdpP">
    <location>
        <begin position="1"/>
        <end position="659"/>
    </location>
</feature>
<feature type="topological domain" description="Cytoplasmic" evidence="14">
    <location>
        <begin position="1"/>
        <end position="8"/>
    </location>
</feature>
<feature type="transmembrane region" description="Helical" evidence="1">
    <location>
        <begin position="9"/>
        <end position="29"/>
    </location>
</feature>
<feature type="transmembrane region" description="Helical" evidence="1">
    <location>
        <begin position="30"/>
        <end position="50"/>
    </location>
</feature>
<feature type="topological domain" description="Cytoplasmic" evidence="14">
    <location>
        <begin position="51"/>
        <end position="659"/>
    </location>
</feature>
<feature type="domain" description="GGDEF" evidence="2">
    <location>
        <begin position="173"/>
        <end position="301"/>
    </location>
</feature>
<feature type="region of interest" description="PAS-like domain, required for heme-binding" evidence="4 10">
    <location>
        <begin position="84"/>
        <end position="149"/>
    </location>
</feature>
<feature type="region of interest" description="DHH domain" evidence="3">
    <location>
        <begin position="339"/>
        <end position="496"/>
    </location>
</feature>
<feature type="region of interest" description="DHHA1 domain" evidence="3">
    <location>
        <begin position="591"/>
        <end position="646"/>
    </location>
</feature>
<feature type="binding site" evidence="14">
    <location>
        <position position="345"/>
    </location>
    <ligand>
        <name>Mn(2+)</name>
        <dbReference type="ChEBI" id="CHEBI:29035"/>
        <label>1</label>
    </ligand>
</feature>
<feature type="binding site" evidence="14">
    <location>
        <position position="349"/>
    </location>
    <ligand>
        <name>Mn(2+)</name>
        <dbReference type="ChEBI" id="CHEBI:29035"/>
        <label>1</label>
    </ligand>
</feature>
<feature type="binding site" evidence="14">
    <location>
        <position position="351"/>
    </location>
    <ligand>
        <name>Mn(2+)</name>
        <dbReference type="ChEBI" id="CHEBI:29035"/>
        <label>2</label>
    </ligand>
</feature>
<feature type="binding site" evidence="14">
    <location>
        <position position="420"/>
    </location>
    <ligand>
        <name>Mn(2+)</name>
        <dbReference type="ChEBI" id="CHEBI:29035"/>
        <label>1</label>
    </ligand>
</feature>
<feature type="binding site" evidence="14">
    <location>
        <position position="420"/>
    </location>
    <ligand>
        <name>Mn(2+)</name>
        <dbReference type="ChEBI" id="CHEBI:29035"/>
        <label>2</label>
    </ligand>
</feature>
<feature type="binding site" evidence="14">
    <location>
        <position position="444"/>
    </location>
    <ligand>
        <name>Mn(2+)</name>
        <dbReference type="ChEBI" id="CHEBI:29035"/>
        <label>2</label>
    </ligand>
</feature>
<feature type="binding site" evidence="14">
    <location>
        <position position="499"/>
    </location>
    <ligand>
        <name>Mn(2+)</name>
        <dbReference type="ChEBI" id="CHEBI:29035"/>
        <label>2</label>
    </ligand>
</feature>
<feature type="mutagenesis site" description="5% ATPase activity." evidence="3">
    <original>D</original>
    <variation>A</variation>
    <location>
        <position position="183"/>
    </location>
</feature>
<feature type="mutagenesis site" description="5% ATPase activity." evidence="3">
    <original>E</original>
    <variation>A</variation>
    <location>
        <position position="225"/>
    </location>
</feature>
<feature type="mutagenesis site" description="5% ATPase activity." evidence="3">
    <original>R</original>
    <variation>A</variation>
    <location>
        <position position="291"/>
    </location>
</feature>
<feature type="mutagenesis site" description="Loss of phosphodiesterase activity, does not confer antibiotic sensitivity when overexpressed." evidence="3 6">
    <original>D</original>
    <variation>A</variation>
    <location>
        <position position="420"/>
    </location>
</feature>
<dbReference type="EC" id="3.1.4.59" evidence="3"/>
<dbReference type="EMBL" id="D26185">
    <property type="protein sequence ID" value="BAA05182.1"/>
    <property type="molecule type" value="Genomic_DNA"/>
</dbReference>
<dbReference type="EMBL" id="AL009126">
    <property type="protein sequence ID" value="CAB16088.1"/>
    <property type="molecule type" value="Genomic_DNA"/>
</dbReference>
<dbReference type="PIR" id="S65976">
    <property type="entry name" value="S65976"/>
</dbReference>
<dbReference type="RefSeq" id="NP_391931.1">
    <property type="nucleotide sequence ID" value="NC_000964.3"/>
</dbReference>
<dbReference type="RefSeq" id="WP_003242517.1">
    <property type="nucleotide sequence ID" value="NZ_OZ025638.1"/>
</dbReference>
<dbReference type="SMR" id="P37484"/>
<dbReference type="FunCoup" id="P37484">
    <property type="interactions" value="6"/>
</dbReference>
<dbReference type="STRING" id="224308.BSU40510"/>
<dbReference type="PaxDb" id="224308-BSU40510"/>
<dbReference type="DNASU" id="937816"/>
<dbReference type="EnsemblBacteria" id="CAB16088">
    <property type="protein sequence ID" value="CAB16088"/>
    <property type="gene ID" value="BSU_40510"/>
</dbReference>
<dbReference type="GeneID" id="937816"/>
<dbReference type="KEGG" id="bsu:BSU40510"/>
<dbReference type="PATRIC" id="fig|224308.179.peg.4385"/>
<dbReference type="eggNOG" id="COG3887">
    <property type="taxonomic scope" value="Bacteria"/>
</dbReference>
<dbReference type="InParanoid" id="P37484"/>
<dbReference type="OrthoDB" id="9759476at2"/>
<dbReference type="PhylomeDB" id="P37484"/>
<dbReference type="BioCyc" id="BSUB:BSU40510-MONOMER"/>
<dbReference type="BRENDA" id="3.1.4.59">
    <property type="organism ID" value="658"/>
</dbReference>
<dbReference type="Proteomes" id="UP000001570">
    <property type="component" value="Chromosome"/>
</dbReference>
<dbReference type="GO" id="GO:0005886">
    <property type="term" value="C:plasma membrane"/>
    <property type="evidence" value="ECO:0007669"/>
    <property type="project" value="UniProtKB-SubCell"/>
</dbReference>
<dbReference type="GO" id="GO:0106409">
    <property type="term" value="F:cyclic-di-AMP phosphodiesterase activity"/>
    <property type="evidence" value="ECO:0007669"/>
    <property type="project" value="UniProtKB-EC"/>
</dbReference>
<dbReference type="GO" id="GO:0016787">
    <property type="term" value="F:hydrolase activity"/>
    <property type="evidence" value="ECO:0007669"/>
    <property type="project" value="UniProtKB-KW"/>
</dbReference>
<dbReference type="GO" id="GO:0046872">
    <property type="term" value="F:metal ion binding"/>
    <property type="evidence" value="ECO:0007669"/>
    <property type="project" value="UniProtKB-KW"/>
</dbReference>
<dbReference type="GO" id="GO:0003676">
    <property type="term" value="F:nucleic acid binding"/>
    <property type="evidence" value="ECO:0007669"/>
    <property type="project" value="InterPro"/>
</dbReference>
<dbReference type="GO" id="GO:0030435">
    <property type="term" value="P:sporulation resulting in formation of a cellular spore"/>
    <property type="evidence" value="ECO:0007669"/>
    <property type="project" value="UniProtKB-KW"/>
</dbReference>
<dbReference type="FunFam" id="3.10.310.30:FF:000002">
    <property type="entry name" value="Cyclic-di-AMP phosphodiesterase"/>
    <property type="match status" value="1"/>
</dbReference>
<dbReference type="FunFam" id="3.90.1640.10:FF:000002">
    <property type="entry name" value="Cyclic-di-AMP phosphodiesterase"/>
    <property type="match status" value="1"/>
</dbReference>
<dbReference type="Gene3D" id="3.10.310.30">
    <property type="match status" value="1"/>
</dbReference>
<dbReference type="Gene3D" id="3.90.1640.10">
    <property type="entry name" value="inorganic pyrophosphatase (n-terminal core)"/>
    <property type="match status" value="1"/>
</dbReference>
<dbReference type="Gene3D" id="3.30.450.20">
    <property type="entry name" value="PAS domain"/>
    <property type="match status" value="1"/>
</dbReference>
<dbReference type="InterPro" id="IPR001667">
    <property type="entry name" value="DDH_dom"/>
</dbReference>
<dbReference type="InterPro" id="IPR038763">
    <property type="entry name" value="DHH_sf"/>
</dbReference>
<dbReference type="InterPro" id="IPR003156">
    <property type="entry name" value="DHHA1_dom"/>
</dbReference>
<dbReference type="InterPro" id="IPR049553">
    <property type="entry name" value="GdpP-like_PAS"/>
</dbReference>
<dbReference type="InterPro" id="IPR014528">
    <property type="entry name" value="GdpP/PdeA"/>
</dbReference>
<dbReference type="InterPro" id="IPR000160">
    <property type="entry name" value="GGDEF_dom"/>
</dbReference>
<dbReference type="InterPro" id="IPR051319">
    <property type="entry name" value="Oligoribo/pAp-PDE_c-di-AMP_PDE"/>
</dbReference>
<dbReference type="PANTHER" id="PTHR47618">
    <property type="entry name" value="BIFUNCTIONAL OLIGORIBONUCLEASE AND PAP PHOSPHATASE NRNA"/>
    <property type="match status" value="1"/>
</dbReference>
<dbReference type="PANTHER" id="PTHR47618:SF2">
    <property type="entry name" value="CYCLIC-DI-AMP PHOSPHODIESTERASE GDPP"/>
    <property type="match status" value="1"/>
</dbReference>
<dbReference type="Pfam" id="PF01368">
    <property type="entry name" value="DHH"/>
    <property type="match status" value="1"/>
</dbReference>
<dbReference type="Pfam" id="PF02272">
    <property type="entry name" value="DHHA1"/>
    <property type="match status" value="1"/>
</dbReference>
<dbReference type="Pfam" id="PF24898">
    <property type="entry name" value="GGDEF_GdpP"/>
    <property type="match status" value="1"/>
</dbReference>
<dbReference type="Pfam" id="PF21370">
    <property type="entry name" value="PAS_GdpP"/>
    <property type="match status" value="1"/>
</dbReference>
<dbReference type="PIRSF" id="PIRSF026583">
    <property type="entry name" value="YybT"/>
    <property type="match status" value="1"/>
</dbReference>
<dbReference type="SMART" id="SM00267">
    <property type="entry name" value="GGDEF"/>
    <property type="match status" value="1"/>
</dbReference>
<dbReference type="SUPFAM" id="SSF64182">
    <property type="entry name" value="DHH phosphoesterases"/>
    <property type="match status" value="1"/>
</dbReference>
<dbReference type="PROSITE" id="PS50887">
    <property type="entry name" value="GGDEF"/>
    <property type="match status" value="1"/>
</dbReference>
<gene>
    <name evidence="11" type="primary">gdpP</name>
    <name type="synonym">yybT</name>
    <name type="ordered locus">BSU40510</name>
</gene>
<keyword id="KW-1003">Cell membrane</keyword>
<keyword id="KW-0349">Heme</keyword>
<keyword id="KW-0378">Hydrolase</keyword>
<keyword id="KW-0408">Iron</keyword>
<keyword id="KW-0464">Manganese</keyword>
<keyword id="KW-0472">Membrane</keyword>
<keyword id="KW-0479">Metal-binding</keyword>
<keyword id="KW-1185">Reference proteome</keyword>
<keyword id="KW-0749">Sporulation</keyword>
<keyword id="KW-0812">Transmembrane</keyword>
<keyword id="KW-1133">Transmembrane helix</keyword>
<comment type="function">
    <text evidence="3 4 6 8 9">Has phosphodiesterase (PDE) activity against cyclic-di-AMP (c-di-AMP) and to a much lesser extent against cyclic-di-GMP (c-di-GMP) in the DHH/DHHA1 domains (PubMed:19901023, PubMed:21257773). Also has ATPase activity, probably via the GGDEF domain (PubMed:19901023, PubMed:21257773). Overexpression leads to increased sensitivity to methyl methanesulfonate (MMS) and H(2)O(2) (PubMed:25616256). Overexpression leads to extreme sensitivity to the beta-lactam antibiotic cefuroxime (CEF), probably dependent on PDE activity (PubMed:22211522). May monitor cellular heme or NO levels (PubMed:21257773). In B.subtilis c-di-AMP is a second messenger that mediates growth, DNA repair and cell wall homeostasis; it is toxic when present in excess (PubMed:26240071).</text>
</comment>
<comment type="catalytic activity">
    <reaction evidence="3">
        <text>3',3'-c-di-AMP + H2O = 5'-O-phosphonoadenylyl-(3'-&gt;5')-adenosine + H(+)</text>
        <dbReference type="Rhea" id="RHEA:54420"/>
        <dbReference type="ChEBI" id="CHEBI:15377"/>
        <dbReference type="ChEBI" id="CHEBI:15378"/>
        <dbReference type="ChEBI" id="CHEBI:71500"/>
        <dbReference type="ChEBI" id="CHEBI:138171"/>
        <dbReference type="EC" id="3.1.4.59"/>
    </reaction>
</comment>
<comment type="cofactor">
    <cofactor evidence="4">
        <name>heme b</name>
        <dbReference type="ChEBI" id="CHEBI:60344"/>
    </cofactor>
    <text evidence="4">Binds 1 heme (probably heme b) per subunit, probably hexa-coordinated, which inhibits PDE and ATPase. The Fe(2+) binds CN(-), CO and NO.</text>
</comment>
<comment type="cofactor">
    <cofactor evidence="3">
        <name>Mg(2+)</name>
        <dbReference type="ChEBI" id="CHEBI:18420"/>
    </cofactor>
    <text evidence="3">ATPase activity (residues 84-303) prefers Mg(2+) over Mn(2+).</text>
</comment>
<comment type="cofactor">
    <cofactor evidence="3">
        <name>Mn(2+)</name>
        <dbReference type="ChEBI" id="CHEBI:29035"/>
    </cofactor>
    <text evidence="3">For phosphodiesterase activity (residues 84-695), probably binds 2 Mn(2+) per subunit, can also use Co(2+), Mg(2+) or Ni(2+).</text>
</comment>
<comment type="activity regulation">
    <text evidence="3 4">Phosphodiesterase (PDE) inhibited by Zn(2+), Ca(2+) inhibits in the presence of Mg(2+) but not Mn(2+); c-di-AMP PDE activity is competitively inhibited by ppGpp (PubMed:19901023). Heme binding (by Fe(2+) or Fe(3+) heme) inhibits PDE, activity is partially restored by KCN or NO only for Fe(2+) heme (PubMed:21257773). Binding of NO to Fe(2+) heme switches from hexa- to pentacoordination (PubMed:21257773). Heme binding inhibits the ATPase activity (PubMed:21257773).</text>
</comment>
<comment type="biophysicochemical properties">
    <kinetics>
        <KM evidence="3">1.3 uM for c-di-AMP</KM>
        <KM evidence="3">349 uM for c-di-GMP</KM>
        <KM evidence="3">0.9 mM for ATP</KM>
        <text evidence="3">kcat is 0.55 sec(-1) for the phosphodiesterase activity with c-di-AMP as substrate. kcat is 0.23 sec(-1) for the phosphodiesterase activity with c-di-GMP as substrate. kcat is 0.59 min(-1) for the ATPase activity.</text>
    </kinetics>
    <phDependence>
        <text evidence="3">Optimum pH is 8.5-9.2 (for a construct expressing residues 84-695).</text>
    </phDependence>
</comment>
<comment type="subcellular location">
    <subcellularLocation>
        <location evidence="1 5">Cell membrane</location>
        <topology evidence="1">Multi-pass membrane protein</topology>
    </subcellularLocation>
    <text evidence="5">After 3.5 hours of sporulation is present in a punctate pattern associated with the cell membrane. Does not co-localize with c-di-AMP synthase DisA.</text>
</comment>
<comment type="developmental stage">
    <text evidence="5">Expressed at low levels at the onset of sporulation, it rises during sporulation (at protein level).</text>
</comment>
<comment type="induction">
    <text evidence="7">Probably transcribed under control of the sigma A factor (sigA), protein levels are negatively regulated by an antisense RNA (PubMed:22956758).</text>
</comment>
<comment type="domain">
    <text evidence="3 4">Has a GGDEF domain (residues 173-310) preceded by a PAS-like domain (residues 84-149) which together have ATPase activity, followed by a region with a DHH (339-496) and a DHHA1 (591-646) domain (PubMed:19901023). The combined GGDEF, DHH and DHHA1 domains have c-di-AMP phosphodiesterase activity (residues 150-659) that is 10-fold enhanced by inclusion of the PAS-like domain (84-149); PDE activity may only require the DHH/DHHA1 domains (PubMed:19901023). The PAS-like domain is important for heme b-binding (PubMed:21257773).</text>
</comment>
<comment type="disruption phenotype">
    <text evidence="3 5 6 8 9">Increased resistance to acid stress, increased sporulation efficiency following DNA damage (by nalidixic acid) (PubMed:19901023). Increases c-di-AMP levels in mid-exponential phase from about 3.8 uM to about 4.3 uM in strain BG214 (PubMed:25616256). Increased levels of c-di-AMP 4-fold during sporulation (PubMed:21566650). Insertion mutations in this gene partially restore antibiotic resistance to the beta-lactam antibiotic cefuroxime (CEF) in a sigM deletion mutant (PubMed:22211522). Decreased sensitivity to MMS and H(2)O(2) (PubMed:25616256). In strain 168 grown in minimal medium and glutamate, 2.2-fold increase in c-di-AMP levels while a double pgpH-gdpP mutant has 4.2-fold increased levels of in c-di-AMP; double mutants die on solid medium after 2 days (PubMed:26240071).</text>
</comment>
<comment type="similarity">
    <text evidence="13">Belongs to the GdpP/PdeA phosphodiesterase family.</text>
</comment>